<protein>
    <recommendedName>
        <fullName evidence="8">Legumin</fullName>
    </recommendedName>
    <alternativeName>
        <fullName evidence="6">Alpha-amylase inhibitor</fullName>
        <shortName evidence="6">CLAI</shortName>
    </alternativeName>
    <component>
        <recommendedName>
            <fullName evidence="2">Legumin alpha chain</fullName>
        </recommendedName>
    </component>
    <component>
        <recommendedName>
            <fullName evidence="2">Legumin beta chain</fullName>
        </recommendedName>
    </component>
</protein>
<gene>
    <name evidence="8" type="primary">leg3</name>
</gene>
<sequence>MAKLLALSLSFCFLLFGTCFALRDQPQQNECQLEHLNALKPDNRIKSEGGLIETWNPSNKQFACAGVALSRATLQPNSLLQTFLHQRSPEIFIQQGNGYFGMVFPGCVETFEEPRESEQGEGSKFSDSHQKVNRFREGDIIAVPTGVVFWMFNDQDTPVIAVSLIDTSSFQNQLDQMPRRFYLAGNHEQEFLRYQQEGSEEEENEGGNIFSGFKRDFLEDALNVNRRIVNKLQGRNEDEEKGAIVKVKGGLSITTPPEKEPRQKRGSRQEEDEDEDEKRQPHRHSRQDEDEDEKRQPHHHSRGGSKSQRDNGFEETICTARLHQNIGSSSSPDIYNPQAGRIKTVTSFDLQALRFLKLSAEFGSLHKNAMFVPHYNLNANSILYALKGRARLLYALNCKGNSVFDGELEAGRALIVPQNFAIAAKSLSDRFSYVAFKTNDRALINVCQKKLLQLLSIWKEMRPGSSSSTAPFHFLFHPAVTQTTKQQLDLVPNQYE</sequence>
<evidence type="ECO:0000250" key="1"/>
<evidence type="ECO:0000250" key="2">
    <source>
        <dbReference type="UniProtKB" id="P04776"/>
    </source>
</evidence>
<evidence type="ECO:0000255" key="3"/>
<evidence type="ECO:0000256" key="4">
    <source>
        <dbReference type="SAM" id="MobiDB-lite"/>
    </source>
</evidence>
<evidence type="ECO:0000269" key="5">
    <source>
    </source>
</evidence>
<evidence type="ECO:0000303" key="6">
    <source>
    </source>
</evidence>
<evidence type="ECO:0000305" key="7"/>
<evidence type="ECO:0000312" key="8">
    <source>
        <dbReference type="EMBL" id="CAB60140.1"/>
    </source>
</evidence>
<keyword id="KW-0022">Alpha-amylase inhibitor</keyword>
<keyword id="KW-0903">Direct protein sequencing</keyword>
<keyword id="KW-1015">Disulfide bond</keyword>
<keyword id="KW-1185">Reference proteome</keyword>
<keyword id="KW-0708">Seed storage protein</keyword>
<keyword id="KW-0732">Signal</keyword>
<keyword id="KW-0758">Storage protein</keyword>
<feature type="signal peptide" evidence="3">
    <location>
        <begin position="1"/>
        <end position="21"/>
    </location>
</feature>
<feature type="chain" id="PRO_0000382239" description="Legumin alpha chain" evidence="1">
    <location>
        <begin position="22"/>
        <end position="311"/>
    </location>
</feature>
<feature type="chain" id="PRO_0000382240" description="Legumin beta chain" evidence="1">
    <location>
        <begin position="312"/>
        <end position="496"/>
    </location>
</feature>
<feature type="domain" description="Cupin type-1 1" evidence="3">
    <location>
        <begin position="36"/>
        <end position="230"/>
    </location>
</feature>
<feature type="domain" description="Cupin type-1 2" evidence="3">
    <location>
        <begin position="324"/>
        <end position="453"/>
    </location>
</feature>
<feature type="region of interest" description="Disordered" evidence="4">
    <location>
        <begin position="240"/>
        <end position="311"/>
    </location>
</feature>
<feature type="compositionally biased region" description="Basic and acidic residues" evidence="4">
    <location>
        <begin position="257"/>
        <end position="269"/>
    </location>
</feature>
<feature type="disulfide bond" evidence="2">
    <location>
        <begin position="31"/>
        <end position="64"/>
    </location>
</feature>
<feature type="disulfide bond" description="Interchain (between alpha and beta chains)" evidence="2">
    <location>
        <begin position="107"/>
        <end position="318"/>
    </location>
</feature>
<proteinExistence type="evidence at protein level"/>
<reference evidence="8" key="1">
    <citation type="submission" date="1997-10" db="EMBL/GenBank/DDBJ databases">
        <authorList>
            <person name="Mandaokar A.D."/>
            <person name="Koundal K.R."/>
        </authorList>
    </citation>
    <scope>NUCLEOTIDE SEQUENCE [GENOMIC DNA]</scope>
    <source>
        <tissue evidence="8">Seedling</tissue>
    </source>
</reference>
<reference evidence="7" key="2">
    <citation type="journal article" date="2009" name="Biosci. Biotechnol. Biochem.">
        <title>Characterization of a novel legumin alpha-amylase inhibitor from chickpea (Cicer arietinum L.) seeds.</title>
        <authorList>
            <person name="Hao X."/>
            <person name="Li J."/>
            <person name="Shi Q."/>
            <person name="Zhang J."/>
            <person name="He X."/>
            <person name="Ma H."/>
        </authorList>
    </citation>
    <scope>PROTEIN SEQUENCE OF 322-341</scope>
    <scope>FUNCTION</scope>
    <source>
        <tissue evidence="5">Seed</tissue>
    </source>
</reference>
<organism>
    <name type="scientific">Cicer arietinum</name>
    <name type="common">Chickpea</name>
    <name type="synonym">Garbanzo</name>
    <dbReference type="NCBI Taxonomy" id="3827"/>
    <lineage>
        <taxon>Eukaryota</taxon>
        <taxon>Viridiplantae</taxon>
        <taxon>Streptophyta</taxon>
        <taxon>Embryophyta</taxon>
        <taxon>Tracheophyta</taxon>
        <taxon>Spermatophyta</taxon>
        <taxon>Magnoliopsida</taxon>
        <taxon>eudicotyledons</taxon>
        <taxon>Gunneridae</taxon>
        <taxon>Pentapetalae</taxon>
        <taxon>rosids</taxon>
        <taxon>fabids</taxon>
        <taxon>Fabales</taxon>
        <taxon>Fabaceae</taxon>
        <taxon>Papilionoideae</taxon>
        <taxon>50 kb inversion clade</taxon>
        <taxon>NPAAA clade</taxon>
        <taxon>Hologalegina</taxon>
        <taxon>IRL clade</taxon>
        <taxon>Cicereae</taxon>
        <taxon>Cicer</taxon>
    </lineage>
</organism>
<name>LEG_CICAR</name>
<dbReference type="EMBL" id="Y15527">
    <property type="protein sequence ID" value="CAB60140.1"/>
    <property type="molecule type" value="Genomic_DNA"/>
</dbReference>
<dbReference type="SMR" id="Q9SMJ4"/>
<dbReference type="STRING" id="3827.Q9SMJ4"/>
<dbReference type="Allergome" id="10703">
    <property type="allergen name" value="Cic a 6"/>
</dbReference>
<dbReference type="PaxDb" id="3827-XP_004493779.1"/>
<dbReference type="eggNOG" id="ENOG502QU1J">
    <property type="taxonomic scope" value="Eukaryota"/>
</dbReference>
<dbReference type="Proteomes" id="UP000087171">
    <property type="component" value="Unplaced"/>
</dbReference>
<dbReference type="GO" id="GO:0015066">
    <property type="term" value="F:alpha-amylase inhibitor activity"/>
    <property type="evidence" value="ECO:0007669"/>
    <property type="project" value="UniProtKB-KW"/>
</dbReference>
<dbReference type="GO" id="GO:0045735">
    <property type="term" value="F:nutrient reservoir activity"/>
    <property type="evidence" value="ECO:0007669"/>
    <property type="project" value="UniProtKB-KW"/>
</dbReference>
<dbReference type="CDD" id="cd02243">
    <property type="entry name" value="cupin_11S_legumin_C"/>
    <property type="match status" value="1"/>
</dbReference>
<dbReference type="CDD" id="cd02242">
    <property type="entry name" value="cupin_11S_legumin_N"/>
    <property type="match status" value="1"/>
</dbReference>
<dbReference type="Gene3D" id="2.60.120.10">
    <property type="entry name" value="Jelly Rolls"/>
    <property type="match status" value="3"/>
</dbReference>
<dbReference type="InterPro" id="IPR022379">
    <property type="entry name" value="11S_seedstore_CS"/>
</dbReference>
<dbReference type="InterPro" id="IPR006044">
    <property type="entry name" value="11S_seedstore_pln"/>
</dbReference>
<dbReference type="InterPro" id="IPR006045">
    <property type="entry name" value="Cupin_1"/>
</dbReference>
<dbReference type="InterPro" id="IPR014710">
    <property type="entry name" value="RmlC-like_jellyroll"/>
</dbReference>
<dbReference type="InterPro" id="IPR011051">
    <property type="entry name" value="RmlC_Cupin_sf"/>
</dbReference>
<dbReference type="InterPro" id="IPR050253">
    <property type="entry name" value="Seed_Storage-Functional"/>
</dbReference>
<dbReference type="PANTHER" id="PTHR31189:SF77">
    <property type="entry name" value="GLYCININ G3"/>
    <property type="match status" value="1"/>
</dbReference>
<dbReference type="PANTHER" id="PTHR31189">
    <property type="entry name" value="OS03G0336100 PROTEIN-RELATED"/>
    <property type="match status" value="1"/>
</dbReference>
<dbReference type="Pfam" id="PF00190">
    <property type="entry name" value="Cupin_1"/>
    <property type="match status" value="2"/>
</dbReference>
<dbReference type="PRINTS" id="PR00439">
    <property type="entry name" value="11SGLOBULIN"/>
</dbReference>
<dbReference type="SMART" id="SM00835">
    <property type="entry name" value="Cupin_1"/>
    <property type="match status" value="2"/>
</dbReference>
<dbReference type="SUPFAM" id="SSF51182">
    <property type="entry name" value="RmlC-like cupins"/>
    <property type="match status" value="2"/>
</dbReference>
<dbReference type="PROSITE" id="PS00305">
    <property type="entry name" value="11S_SEED_STORAGE"/>
    <property type="match status" value="1"/>
</dbReference>
<comment type="function">
    <text evidence="2 5">Seed storage protein (By similarity). Alpha-amylase inhibitor.</text>
</comment>
<comment type="subunit">
    <text evidence="2">Hexamer; each subunit is composed of an acidic and a basic chain derived from a single precursor and linked by a disulfide bond.</text>
</comment>
<comment type="similarity">
    <text evidence="3">Belongs to the 11S seed storage protein (globulins) family.</text>
</comment>
<accession>Q9SMJ4</accession>